<accession>Q5FUS6</accession>
<protein>
    <recommendedName>
        <fullName evidence="1">Undecaprenyl-diphosphatase</fullName>
        <ecNumber evidence="1">3.6.1.27</ecNumber>
    </recommendedName>
    <alternativeName>
        <fullName evidence="1">Bacitracin resistance protein</fullName>
    </alternativeName>
    <alternativeName>
        <fullName evidence="1">Undecaprenyl pyrophosphate phosphatase</fullName>
    </alternativeName>
</protein>
<evidence type="ECO:0000255" key="1">
    <source>
        <dbReference type="HAMAP-Rule" id="MF_01006"/>
    </source>
</evidence>
<organism>
    <name type="scientific">Gluconobacter oxydans (strain 621H)</name>
    <name type="common">Gluconobacter suboxydans</name>
    <dbReference type="NCBI Taxonomy" id="290633"/>
    <lineage>
        <taxon>Bacteria</taxon>
        <taxon>Pseudomonadati</taxon>
        <taxon>Pseudomonadota</taxon>
        <taxon>Alphaproteobacteria</taxon>
        <taxon>Acetobacterales</taxon>
        <taxon>Acetobacteraceae</taxon>
        <taxon>Gluconobacter</taxon>
    </lineage>
</organism>
<comment type="function">
    <text evidence="1">Catalyzes the dephosphorylation of undecaprenyl diphosphate (UPP). Confers resistance to bacitracin.</text>
</comment>
<comment type="catalytic activity">
    <reaction evidence="1">
        <text>di-trans,octa-cis-undecaprenyl diphosphate + H2O = di-trans,octa-cis-undecaprenyl phosphate + phosphate + H(+)</text>
        <dbReference type="Rhea" id="RHEA:28094"/>
        <dbReference type="ChEBI" id="CHEBI:15377"/>
        <dbReference type="ChEBI" id="CHEBI:15378"/>
        <dbReference type="ChEBI" id="CHEBI:43474"/>
        <dbReference type="ChEBI" id="CHEBI:58405"/>
        <dbReference type="ChEBI" id="CHEBI:60392"/>
        <dbReference type="EC" id="3.6.1.27"/>
    </reaction>
</comment>
<comment type="subcellular location">
    <subcellularLocation>
        <location evidence="1">Cell inner membrane</location>
        <topology evidence="1">Multi-pass membrane protein</topology>
    </subcellularLocation>
</comment>
<comment type="miscellaneous">
    <text>Bacitracin is thought to be involved in the inhibition of peptidoglycan synthesis by sequestering undecaprenyl diphosphate, thereby reducing the pool of lipid carrier available.</text>
</comment>
<comment type="similarity">
    <text evidence="1">Belongs to the UppP family.</text>
</comment>
<proteinExistence type="inferred from homology"/>
<reference key="1">
    <citation type="journal article" date="2005" name="Nat. Biotechnol.">
        <title>Complete genome sequence of the acetic acid bacterium Gluconobacter oxydans.</title>
        <authorList>
            <person name="Prust C."/>
            <person name="Hoffmeister M."/>
            <person name="Liesegang H."/>
            <person name="Wiezer A."/>
            <person name="Fricke W.F."/>
            <person name="Ehrenreich A."/>
            <person name="Gottschalk G."/>
            <person name="Deppenmeier U."/>
        </authorList>
    </citation>
    <scope>NUCLEOTIDE SEQUENCE [LARGE SCALE GENOMIC DNA]</scope>
    <source>
        <strain>621H</strain>
    </source>
</reference>
<dbReference type="EC" id="3.6.1.27" evidence="1"/>
<dbReference type="EMBL" id="CP000009">
    <property type="protein sequence ID" value="AAW59823.1"/>
    <property type="molecule type" value="Genomic_DNA"/>
</dbReference>
<dbReference type="RefSeq" id="WP_011251627.1">
    <property type="nucleotide sequence ID" value="NZ_LT900338.1"/>
</dbReference>
<dbReference type="SMR" id="Q5FUS6"/>
<dbReference type="STRING" id="290633.GOX0024"/>
<dbReference type="KEGG" id="gox:GOX0024"/>
<dbReference type="eggNOG" id="COG1968">
    <property type="taxonomic scope" value="Bacteria"/>
</dbReference>
<dbReference type="HOGENOM" id="CLU_060296_1_1_5"/>
<dbReference type="Proteomes" id="UP000006375">
    <property type="component" value="Chromosome"/>
</dbReference>
<dbReference type="GO" id="GO:0005886">
    <property type="term" value="C:plasma membrane"/>
    <property type="evidence" value="ECO:0007669"/>
    <property type="project" value="UniProtKB-SubCell"/>
</dbReference>
<dbReference type="GO" id="GO:0050380">
    <property type="term" value="F:undecaprenyl-diphosphatase activity"/>
    <property type="evidence" value="ECO:0007669"/>
    <property type="project" value="UniProtKB-UniRule"/>
</dbReference>
<dbReference type="GO" id="GO:0071555">
    <property type="term" value="P:cell wall organization"/>
    <property type="evidence" value="ECO:0007669"/>
    <property type="project" value="UniProtKB-KW"/>
</dbReference>
<dbReference type="GO" id="GO:0009252">
    <property type="term" value="P:peptidoglycan biosynthetic process"/>
    <property type="evidence" value="ECO:0007669"/>
    <property type="project" value="UniProtKB-KW"/>
</dbReference>
<dbReference type="GO" id="GO:0008360">
    <property type="term" value="P:regulation of cell shape"/>
    <property type="evidence" value="ECO:0007669"/>
    <property type="project" value="UniProtKB-KW"/>
</dbReference>
<dbReference type="GO" id="GO:0046677">
    <property type="term" value="P:response to antibiotic"/>
    <property type="evidence" value="ECO:0007669"/>
    <property type="project" value="UniProtKB-UniRule"/>
</dbReference>
<dbReference type="HAMAP" id="MF_01006">
    <property type="entry name" value="Undec_diphosphatase"/>
    <property type="match status" value="1"/>
</dbReference>
<dbReference type="InterPro" id="IPR003824">
    <property type="entry name" value="UppP"/>
</dbReference>
<dbReference type="NCBIfam" id="NF001397">
    <property type="entry name" value="PRK00281.3-4"/>
    <property type="match status" value="1"/>
</dbReference>
<dbReference type="PANTHER" id="PTHR30622">
    <property type="entry name" value="UNDECAPRENYL-DIPHOSPHATASE"/>
    <property type="match status" value="1"/>
</dbReference>
<dbReference type="PANTHER" id="PTHR30622:SF2">
    <property type="entry name" value="UNDECAPRENYL-DIPHOSPHATASE"/>
    <property type="match status" value="1"/>
</dbReference>
<dbReference type="Pfam" id="PF02673">
    <property type="entry name" value="BacA"/>
    <property type="match status" value="1"/>
</dbReference>
<keyword id="KW-0046">Antibiotic resistance</keyword>
<keyword id="KW-0997">Cell inner membrane</keyword>
<keyword id="KW-1003">Cell membrane</keyword>
<keyword id="KW-0133">Cell shape</keyword>
<keyword id="KW-0961">Cell wall biogenesis/degradation</keyword>
<keyword id="KW-0378">Hydrolase</keyword>
<keyword id="KW-0472">Membrane</keyword>
<keyword id="KW-0573">Peptidoglycan synthesis</keyword>
<keyword id="KW-1185">Reference proteome</keyword>
<keyword id="KW-0812">Transmembrane</keyword>
<keyword id="KW-1133">Transmembrane helix</keyword>
<sequence length="280" mass="30615">MTLLQALILAIVQGITEPFPVSSLGHAVLLPALLHWDLDEHAPMFLPFLTMLHVGTLVALAGVFWRDWMAILGGMFGRYGSYRQMEAIRIFGLLVIATIPAVLVGWLLEHRLRAVFGTPLAVAGFLILNGFLLMVTEWLRRQKGHRDHKPIATLAPKDAVIIGIWQCLALLPGLSRSGATMNGGLLRGLDHETAARFSLLMAQPIVLAATVREAWQMRHMTISHDIMVQCVAGAVVAGLTALICSLVMLRFFRNHDGWALTPFGVYCVLAGLFAGAVILL</sequence>
<name>UPPP_GLUOX</name>
<gene>
    <name evidence="1" type="primary">uppP</name>
    <name type="ordered locus">GOX0024</name>
</gene>
<feature type="chain" id="PRO_0000151156" description="Undecaprenyl-diphosphatase">
    <location>
        <begin position="1"/>
        <end position="280"/>
    </location>
</feature>
<feature type="transmembrane region" description="Helical" evidence="1">
    <location>
        <begin position="1"/>
        <end position="21"/>
    </location>
</feature>
<feature type="transmembrane region" description="Helical" evidence="1">
    <location>
        <begin position="45"/>
        <end position="65"/>
    </location>
</feature>
<feature type="transmembrane region" description="Helical" evidence="1">
    <location>
        <begin position="90"/>
        <end position="110"/>
    </location>
</feature>
<feature type="transmembrane region" description="Helical" evidence="1">
    <location>
        <begin position="115"/>
        <end position="135"/>
    </location>
</feature>
<feature type="transmembrane region" description="Helical" evidence="1">
    <location>
        <begin position="151"/>
        <end position="171"/>
    </location>
</feature>
<feature type="transmembrane region" description="Helical" evidence="1">
    <location>
        <begin position="226"/>
        <end position="246"/>
    </location>
</feature>
<feature type="transmembrane region" description="Helical" evidence="1">
    <location>
        <begin position="260"/>
        <end position="280"/>
    </location>
</feature>